<evidence type="ECO:0000250" key="1"/>
<evidence type="ECO:0000250" key="2">
    <source>
        <dbReference type="UniProtKB" id="P11653"/>
    </source>
</evidence>
<evidence type="ECO:0000255" key="3">
    <source>
        <dbReference type="PROSITE-ProRule" id="PRU00666"/>
    </source>
</evidence>
<evidence type="ECO:0000305" key="4"/>
<comment type="function">
    <text evidence="1">Catalyzes the isomerization of succinyl-CoA to methylmalonyl-CoA during synthesis of propionate from tricarboxylic acid-cycle intermediates.</text>
</comment>
<comment type="catalytic activity">
    <reaction>
        <text>(R)-methylmalonyl-CoA = succinyl-CoA</text>
        <dbReference type="Rhea" id="RHEA:22888"/>
        <dbReference type="ChEBI" id="CHEBI:57292"/>
        <dbReference type="ChEBI" id="CHEBI:57326"/>
        <dbReference type="EC" id="5.4.99.2"/>
    </reaction>
</comment>
<comment type="cofactor">
    <cofactor evidence="1">
        <name>adenosylcob(III)alamin</name>
        <dbReference type="ChEBI" id="CHEBI:18408"/>
    </cofactor>
</comment>
<comment type="pathway">
    <text>Metabolic intermediate metabolism; propanoyl-CoA degradation; succinyl-CoA from propanoyl-CoA: step 3/3.</text>
</comment>
<comment type="subunit">
    <text evidence="1">Heterodimer of an alpha and a beta chain.</text>
</comment>
<comment type="similarity">
    <text evidence="4">Belongs to the methylmalonyl-CoA mutase family.</text>
</comment>
<gene>
    <name type="primary">mutB</name>
    <name type="ordered locus">BQ2027_MB1530</name>
</gene>
<sequence>MTTKTPVIGSFAGVPLHSERAAQSPTEAAVHTHVAAAAAAHGYTPEQLVWHTPEGIDVTPVYIAADRAAAEAEGYPLHSFPGEPPFVRGPYPTMYVNQPWTIRQYAGFSTAADSNAFYRRNLAAGQKGLSVAFDLATHRGYDSDHPRVQGDVGMAGVAIDSILDMRQLFDGIDLSTVSVSMTMNGAVLPILALYVVAAEEQGVAPEQLAGTIQNDILKEFMVRNTYIYPPKPSMRIISDIFAYTSAKMPKFNSISISGYHIQEAGATADLELAYTLADGVDYIRAGLNAGLDIDSFAPRLSFFWGIGMNFFMEVAKLRAGRLLWSELVAQFAPKSAKSLSLRTHSQTSGWSLTAQDVFNNVARTCIEAMAATQGHTQSLHTNALDEALALPTDFSARIARNTQLVLQQESGTTRPIDPWGGSYYVEWLTHRLARRARAHIAEVAEHGGMAQAISDGIPKLRIEEAAARTQARIDSGQQPVVGVNKYQVPEDHEIEVLKVENSRVRAEQLAKLQRLRAGRDEPAVRAALAELTRAAAEQGRAGADGLGNNLLALAIDAARAQATVGEISEALEKVYGRHRAEIRTISGVYRDEVGKAPNIAAATELVEKFAEADGRRPRILIAKMGQDGHDRGQKVIATAFADIGFDVDVGSLFSTPEEVARQAADNDVHVIGVSSLAAGHLTLVPALRDALAQVGRPDIMIVVGGVIPPGDFDELYAAGATAIFPPGTVIADAAIDLLHRLAERLGYTLD</sequence>
<proteinExistence type="inferred from homology"/>
<name>MUTB_MYCBO</name>
<protein>
    <recommendedName>
        <fullName>Probable methylmalonyl-CoA mutase large subunit</fullName>
        <shortName>MCM</shortName>
        <ecNumber>5.4.99.2</ecNumber>
    </recommendedName>
</protein>
<reference key="1">
    <citation type="journal article" date="2003" name="Proc. Natl. Acad. Sci. U.S.A.">
        <title>The complete genome sequence of Mycobacterium bovis.</title>
        <authorList>
            <person name="Garnier T."/>
            <person name="Eiglmeier K."/>
            <person name="Camus J.-C."/>
            <person name="Medina N."/>
            <person name="Mansoor H."/>
            <person name="Pryor M."/>
            <person name="Duthoy S."/>
            <person name="Grondin S."/>
            <person name="Lacroix C."/>
            <person name="Monsempe C."/>
            <person name="Simon S."/>
            <person name="Harris B."/>
            <person name="Atkin R."/>
            <person name="Doggett J."/>
            <person name="Mayes R."/>
            <person name="Keating L."/>
            <person name="Wheeler P.R."/>
            <person name="Parkhill J."/>
            <person name="Barrell B.G."/>
            <person name="Cole S.T."/>
            <person name="Gordon S.V."/>
            <person name="Hewinson R.G."/>
        </authorList>
    </citation>
    <scope>NUCLEOTIDE SEQUENCE [LARGE SCALE GENOMIC DNA]</scope>
    <source>
        <strain>ATCC BAA-935 / AF2122/97</strain>
    </source>
</reference>
<reference key="2">
    <citation type="journal article" date="2017" name="Genome Announc.">
        <title>Updated reference genome sequence and annotation of Mycobacterium bovis AF2122/97.</title>
        <authorList>
            <person name="Malone K.M."/>
            <person name="Farrell D."/>
            <person name="Stuber T.P."/>
            <person name="Schubert O.T."/>
            <person name="Aebersold R."/>
            <person name="Robbe-Austerman S."/>
            <person name="Gordon S.V."/>
        </authorList>
    </citation>
    <scope>NUCLEOTIDE SEQUENCE [LARGE SCALE GENOMIC DNA]</scope>
    <scope>GENOME REANNOTATION</scope>
    <source>
        <strain>ATCC BAA-935 / AF2122/97</strain>
    </source>
</reference>
<dbReference type="EC" id="5.4.99.2"/>
<dbReference type="EMBL" id="LT708304">
    <property type="protein sequence ID" value="SIU00133.1"/>
    <property type="molecule type" value="Genomic_DNA"/>
</dbReference>
<dbReference type="RefSeq" id="NP_855182.1">
    <property type="nucleotide sequence ID" value="NC_002945.3"/>
</dbReference>
<dbReference type="SMR" id="P65488"/>
<dbReference type="KEGG" id="mbo:BQ2027_MB1530"/>
<dbReference type="PATRIC" id="fig|233413.5.peg.1672"/>
<dbReference type="UniPathway" id="UPA00945">
    <property type="reaction ID" value="UER00910"/>
</dbReference>
<dbReference type="Proteomes" id="UP000001419">
    <property type="component" value="Chromosome"/>
</dbReference>
<dbReference type="GO" id="GO:0005737">
    <property type="term" value="C:cytoplasm"/>
    <property type="evidence" value="ECO:0007669"/>
    <property type="project" value="TreeGrafter"/>
</dbReference>
<dbReference type="GO" id="GO:0031419">
    <property type="term" value="F:cobalamin binding"/>
    <property type="evidence" value="ECO:0007669"/>
    <property type="project" value="UniProtKB-KW"/>
</dbReference>
<dbReference type="GO" id="GO:0046872">
    <property type="term" value="F:metal ion binding"/>
    <property type="evidence" value="ECO:0007669"/>
    <property type="project" value="UniProtKB-KW"/>
</dbReference>
<dbReference type="GO" id="GO:0004494">
    <property type="term" value="F:methylmalonyl-CoA mutase activity"/>
    <property type="evidence" value="ECO:0007669"/>
    <property type="project" value="UniProtKB-EC"/>
</dbReference>
<dbReference type="GO" id="GO:0019678">
    <property type="term" value="P:propionate metabolic process, methylmalonyl pathway"/>
    <property type="evidence" value="ECO:0007669"/>
    <property type="project" value="TreeGrafter"/>
</dbReference>
<dbReference type="CDD" id="cd02071">
    <property type="entry name" value="MM_CoA_mut_B12_BD"/>
    <property type="match status" value="1"/>
</dbReference>
<dbReference type="CDD" id="cd03679">
    <property type="entry name" value="MM_CoA_mutase_alpha_like"/>
    <property type="match status" value="1"/>
</dbReference>
<dbReference type="FunFam" id="3.40.50.280:FF:000002">
    <property type="entry name" value="Methylmalonyl-CoA mutase, mitochondrial"/>
    <property type="match status" value="1"/>
</dbReference>
<dbReference type="FunFam" id="3.20.20.240:FF:000001">
    <property type="entry name" value="Probable methylmalonyl-coa mutase"/>
    <property type="match status" value="1"/>
</dbReference>
<dbReference type="Gene3D" id="3.40.50.280">
    <property type="entry name" value="Cobalamin-binding domain"/>
    <property type="match status" value="1"/>
</dbReference>
<dbReference type="Gene3D" id="3.20.20.240">
    <property type="entry name" value="Methylmalonyl-CoA mutase"/>
    <property type="match status" value="1"/>
</dbReference>
<dbReference type="InterPro" id="IPR006159">
    <property type="entry name" value="Acid_CoA_mut_C"/>
</dbReference>
<dbReference type="InterPro" id="IPR016176">
    <property type="entry name" value="Cbl-dep_enz_cat"/>
</dbReference>
<dbReference type="InterPro" id="IPR006158">
    <property type="entry name" value="Cobalamin-bd"/>
</dbReference>
<dbReference type="InterPro" id="IPR036724">
    <property type="entry name" value="Cobalamin-bd_sf"/>
</dbReference>
<dbReference type="InterPro" id="IPR006099">
    <property type="entry name" value="MeMalonylCoA_mutase_a/b_cat"/>
</dbReference>
<dbReference type="InterPro" id="IPR006098">
    <property type="entry name" value="MMCoA_mutase_a_cat"/>
</dbReference>
<dbReference type="NCBIfam" id="TIGR00640">
    <property type="entry name" value="acid_CoA_mut_C"/>
    <property type="match status" value="1"/>
</dbReference>
<dbReference type="NCBIfam" id="TIGR00641">
    <property type="entry name" value="acid_CoA_mut_N"/>
    <property type="match status" value="1"/>
</dbReference>
<dbReference type="NCBIfam" id="NF006944">
    <property type="entry name" value="PRK09426.1"/>
    <property type="match status" value="1"/>
</dbReference>
<dbReference type="PANTHER" id="PTHR48101:SF4">
    <property type="entry name" value="METHYLMALONYL-COA MUTASE, MITOCHONDRIAL"/>
    <property type="match status" value="1"/>
</dbReference>
<dbReference type="PANTHER" id="PTHR48101">
    <property type="entry name" value="METHYLMALONYL-COA MUTASE, MITOCHONDRIAL-RELATED"/>
    <property type="match status" value="1"/>
</dbReference>
<dbReference type="Pfam" id="PF02310">
    <property type="entry name" value="B12-binding"/>
    <property type="match status" value="1"/>
</dbReference>
<dbReference type="Pfam" id="PF01642">
    <property type="entry name" value="MM_CoA_mutase"/>
    <property type="match status" value="1"/>
</dbReference>
<dbReference type="SUPFAM" id="SSF52242">
    <property type="entry name" value="Cobalamin (vitamin B12)-binding domain"/>
    <property type="match status" value="1"/>
</dbReference>
<dbReference type="SUPFAM" id="SSF51703">
    <property type="entry name" value="Cobalamin (vitamin B12)-dependent enzymes"/>
    <property type="match status" value="1"/>
</dbReference>
<dbReference type="PROSITE" id="PS51332">
    <property type="entry name" value="B12_BINDING"/>
    <property type="match status" value="1"/>
</dbReference>
<dbReference type="PROSITE" id="PS00544">
    <property type="entry name" value="METMALONYL_COA_MUTASE"/>
    <property type="match status" value="1"/>
</dbReference>
<organism>
    <name type="scientific">Mycobacterium bovis (strain ATCC BAA-935 / AF2122/97)</name>
    <dbReference type="NCBI Taxonomy" id="233413"/>
    <lineage>
        <taxon>Bacteria</taxon>
        <taxon>Bacillati</taxon>
        <taxon>Actinomycetota</taxon>
        <taxon>Actinomycetes</taxon>
        <taxon>Mycobacteriales</taxon>
        <taxon>Mycobacteriaceae</taxon>
        <taxon>Mycobacterium</taxon>
        <taxon>Mycobacterium tuberculosis complex</taxon>
    </lineage>
</organism>
<keyword id="KW-0846">Cobalamin</keyword>
<keyword id="KW-0170">Cobalt</keyword>
<keyword id="KW-0413">Isomerase</keyword>
<keyword id="KW-0479">Metal-binding</keyword>
<keyword id="KW-1185">Reference proteome</keyword>
<accession>P65488</accession>
<accession>A0A1R3Y0N2</accession>
<accession>P71774</accession>
<accession>X2BID6</accession>
<feature type="chain" id="PRO_0000194271" description="Probable methylmalonyl-CoA mutase large subunit">
    <location>
        <begin position="1"/>
        <end position="750"/>
    </location>
</feature>
<feature type="domain" description="B12-binding" evidence="3">
    <location>
        <begin position="616"/>
        <end position="748"/>
    </location>
</feature>
<feature type="binding site" evidence="2">
    <location>
        <position position="91"/>
    </location>
    <ligand>
        <name>(R)-methylmalonyl-CoA</name>
        <dbReference type="ChEBI" id="CHEBI:57326"/>
    </ligand>
</feature>
<feature type="binding site" evidence="2">
    <location>
        <position position="94"/>
    </location>
    <ligand>
        <name>(R)-methylmalonyl-CoA</name>
        <dbReference type="ChEBI" id="CHEBI:57326"/>
    </ligand>
</feature>
<feature type="binding site" evidence="2">
    <location>
        <position position="101"/>
    </location>
    <ligand>
        <name>(R)-methylmalonyl-CoA</name>
        <dbReference type="ChEBI" id="CHEBI:57326"/>
    </ligand>
</feature>
<feature type="binding site" evidence="2">
    <location>
        <position position="103"/>
    </location>
    <ligand>
        <name>(R)-methylmalonyl-CoA</name>
        <dbReference type="ChEBI" id="CHEBI:57326"/>
    </ligand>
</feature>
<feature type="binding site" evidence="2">
    <location>
        <position position="105"/>
    </location>
    <ligand>
        <name>(R)-methylmalonyl-CoA</name>
        <dbReference type="ChEBI" id="CHEBI:57326"/>
    </ligand>
</feature>
<feature type="binding site" evidence="2">
    <location>
        <position position="130"/>
    </location>
    <ligand>
        <name>(R)-methylmalonyl-CoA</name>
        <dbReference type="ChEBI" id="CHEBI:57326"/>
    </ligand>
</feature>
<feature type="binding site" evidence="2">
    <location>
        <position position="133"/>
    </location>
    <ligand>
        <name>cob(II)alamin</name>
        <dbReference type="ChEBI" id="CHEBI:16304"/>
    </ligand>
</feature>
<feature type="binding site" evidence="2">
    <location>
        <position position="155"/>
    </location>
    <ligand>
        <name>cob(II)alamin</name>
        <dbReference type="ChEBI" id="CHEBI:16304"/>
    </ligand>
</feature>
<feature type="binding site" evidence="2">
    <location>
        <position position="211"/>
    </location>
    <ligand>
        <name>(R)-methylmalonyl-CoA</name>
        <dbReference type="ChEBI" id="CHEBI:57326"/>
    </ligand>
</feature>
<feature type="binding site" evidence="2">
    <location>
        <position position="213"/>
    </location>
    <ligand>
        <name>(R)-methylmalonyl-CoA</name>
        <dbReference type="ChEBI" id="CHEBI:57326"/>
    </ligand>
</feature>
<feature type="binding site" evidence="2">
    <location>
        <position position="222"/>
    </location>
    <ligand>
        <name>cob(II)alamin</name>
        <dbReference type="ChEBI" id="CHEBI:16304"/>
    </ligand>
</feature>
<feature type="binding site" evidence="2">
    <location>
        <position position="223"/>
    </location>
    <ligand>
        <name>(R)-methylmalonyl-CoA</name>
        <dbReference type="ChEBI" id="CHEBI:57326"/>
    </ligand>
</feature>
<feature type="binding site" evidence="2">
    <location>
        <position position="223"/>
    </location>
    <ligand>
        <name>cob(II)alamin</name>
        <dbReference type="ChEBI" id="CHEBI:16304"/>
    </ligand>
</feature>
<feature type="binding site" evidence="2">
    <location>
        <position position="260"/>
    </location>
    <ligand>
        <name>(R)-methylmalonyl-CoA</name>
        <dbReference type="ChEBI" id="CHEBI:57326"/>
    </ligand>
</feature>
<feature type="binding site" evidence="2">
    <location>
        <position position="299"/>
    </location>
    <ligand>
        <name>(R)-methylmalonyl-CoA</name>
        <dbReference type="ChEBI" id="CHEBI:57326"/>
    </ligand>
</feature>
<feature type="binding site" evidence="2">
    <location>
        <position position="301"/>
    </location>
    <ligand>
        <name>(R)-methylmalonyl-CoA</name>
        <dbReference type="ChEBI" id="CHEBI:57326"/>
    </ligand>
</feature>
<feature type="binding site" evidence="2">
    <location>
        <position position="349"/>
    </location>
    <ligand>
        <name>cob(II)alamin</name>
        <dbReference type="ChEBI" id="CHEBI:16304"/>
    </ligand>
</feature>
<feature type="binding site" evidence="2">
    <location>
        <position position="386"/>
    </location>
    <ligand>
        <name>cob(II)alamin</name>
        <dbReference type="ChEBI" id="CHEBI:16304"/>
    </ligand>
</feature>
<feature type="binding site" evidence="2">
    <location>
        <position position="389"/>
    </location>
    <ligand>
        <name>cob(II)alamin</name>
        <dbReference type="ChEBI" id="CHEBI:16304"/>
    </ligand>
</feature>
<feature type="binding site" evidence="2">
    <location>
        <position position="628"/>
    </location>
    <ligand>
        <name>cob(II)alamin</name>
        <dbReference type="ChEBI" id="CHEBI:16304"/>
    </ligand>
</feature>
<feature type="binding site" description="axial binding residue" evidence="2">
    <location>
        <position position="629"/>
    </location>
    <ligand>
        <name>cob(II)alamin</name>
        <dbReference type="ChEBI" id="CHEBI:16304"/>
    </ligand>
    <ligandPart>
        <name>Co</name>
        <dbReference type="ChEBI" id="CHEBI:27638"/>
    </ligandPart>
</feature>
<feature type="binding site" evidence="2">
    <location>
        <position position="630"/>
    </location>
    <ligand>
        <name>cob(II)alamin</name>
        <dbReference type="ChEBI" id="CHEBI:16304"/>
    </ligand>
</feature>
<feature type="binding site" evidence="2">
    <location>
        <position position="631"/>
    </location>
    <ligand>
        <name>cob(II)alamin</name>
        <dbReference type="ChEBI" id="CHEBI:16304"/>
    </ligand>
</feature>
<feature type="binding site" evidence="2">
    <location>
        <position position="674"/>
    </location>
    <ligand>
        <name>cob(II)alamin</name>
        <dbReference type="ChEBI" id="CHEBI:16304"/>
    </ligand>
</feature>
<feature type="binding site" evidence="2">
    <location>
        <position position="676"/>
    </location>
    <ligand>
        <name>cob(II)alamin</name>
        <dbReference type="ChEBI" id="CHEBI:16304"/>
    </ligand>
</feature>
<feature type="binding site" evidence="2">
    <location>
        <position position="705"/>
    </location>
    <ligand>
        <name>cob(II)alamin</name>
        <dbReference type="ChEBI" id="CHEBI:16304"/>
    </ligand>
</feature>
<feature type="binding site" evidence="2">
    <location>
        <position position="728"/>
    </location>
    <ligand>
        <name>cob(II)alamin</name>
        <dbReference type="ChEBI" id="CHEBI:16304"/>
    </ligand>
</feature>
<feature type="site" description="Transition state stabilizer" evidence="2">
    <location>
        <position position="105"/>
    </location>
</feature>